<name>GUAA_EMENI</name>
<comment type="function">
    <text evidence="1">Catalyzes the conversion of xanthine monophosphate (XMP) to GMP in the presence of glutamine and ATP through an adenyl-XMP intermediate.</text>
</comment>
<comment type="catalytic activity">
    <reaction evidence="1">
        <text>XMP + L-glutamine + ATP + H2O = GMP + L-glutamate + AMP + diphosphate + 2 H(+)</text>
        <dbReference type="Rhea" id="RHEA:11680"/>
        <dbReference type="ChEBI" id="CHEBI:15377"/>
        <dbReference type="ChEBI" id="CHEBI:15378"/>
        <dbReference type="ChEBI" id="CHEBI:29985"/>
        <dbReference type="ChEBI" id="CHEBI:30616"/>
        <dbReference type="ChEBI" id="CHEBI:33019"/>
        <dbReference type="ChEBI" id="CHEBI:57464"/>
        <dbReference type="ChEBI" id="CHEBI:58115"/>
        <dbReference type="ChEBI" id="CHEBI:58359"/>
        <dbReference type="ChEBI" id="CHEBI:456215"/>
        <dbReference type="EC" id="6.3.5.2"/>
    </reaction>
</comment>
<comment type="cofactor">
    <cofactor evidence="3">
        <name>Mg(2+)</name>
        <dbReference type="ChEBI" id="CHEBI:18420"/>
    </cofactor>
</comment>
<comment type="pathway">
    <text evidence="1">Purine metabolism; GMP biosynthesis; GMP from XMP (L-Gln route): step 1/1.</text>
</comment>
<comment type="subunit">
    <text evidence="3">Homodimer.</text>
</comment>
<comment type="subcellular location">
    <subcellularLocation>
        <location evidence="4">Cytoplasm</location>
        <location evidence="4">Cytosol</location>
    </subcellularLocation>
</comment>
<protein>
    <recommendedName>
        <fullName>GMP synthase [glutamine-hydrolyzing]</fullName>
        <ecNumber evidence="1">6.3.5.2</ecNumber>
    </recommendedName>
    <alternativeName>
        <fullName>GMP synthetase</fullName>
    </alternativeName>
    <alternativeName>
        <fullName>Glutamine amidotransferase</fullName>
    </alternativeName>
</protein>
<sequence length="533" mass="58872">MADTIPHNTFDTILVLDFGSQYTHLITRRLREINVYSEMLPCTQKLADLGWKPKGIILSGGPYSVYEEGAPHADPAFFELGVPILGICYGLQELAHRLHADNVVAGTAREYGHADLKATKFGGHVDKLFENIEGDMTVWMSHGDKLRNLPEGFHTIGTTQNSEYAAIAHKSDPIYGIQFHPEVTHTPQGGQLLKNFAVGICGAEQKWTMAEFIGQEIQRIRSLVGPDGQVLGAVSGGVDSTVAAKLMTEAIGDRFHAVLVDNGCMRLNECEKVQEVLQEQLGINLTVVDAGEQFLAGLKGVHDPEQKRKFIGGKFIDVFEDEARKIEAKSNGKVEWFLQGTLYPDVIESISFKGPSQTIKTHHNVGGIAERLMRGHGLKLIEPLRELFKDEVRELGRQLGISPELVGRHPFPGPGIAIRVLGEVTREKVEMARQADHIFISMIREAGIYDEIGQAYAALDPSRAVGVMGDKRVYANIILLRAISTKDFMTATPYPFSYEFLSKVSTRIVNEVAGVCRVCYDYTSKPPGTIEME</sequence>
<proteinExistence type="inferred from homology"/>
<reference key="1">
    <citation type="journal article" date="2005" name="Nature">
        <title>Sequencing of Aspergillus nidulans and comparative analysis with A. fumigatus and A. oryzae.</title>
        <authorList>
            <person name="Galagan J.E."/>
            <person name="Calvo S.E."/>
            <person name="Cuomo C."/>
            <person name="Ma L.-J."/>
            <person name="Wortman J.R."/>
            <person name="Batzoglou S."/>
            <person name="Lee S.-I."/>
            <person name="Bastuerkmen M."/>
            <person name="Spevak C.C."/>
            <person name="Clutterbuck J."/>
            <person name="Kapitonov V."/>
            <person name="Jurka J."/>
            <person name="Scazzocchio C."/>
            <person name="Farman M.L."/>
            <person name="Butler J."/>
            <person name="Purcell S."/>
            <person name="Harris S."/>
            <person name="Braus G.H."/>
            <person name="Draht O."/>
            <person name="Busch S."/>
            <person name="D'Enfert C."/>
            <person name="Bouchier C."/>
            <person name="Goldman G.H."/>
            <person name="Bell-Pedersen D."/>
            <person name="Griffiths-Jones S."/>
            <person name="Doonan J.H."/>
            <person name="Yu J."/>
            <person name="Vienken K."/>
            <person name="Pain A."/>
            <person name="Freitag M."/>
            <person name="Selker E.U."/>
            <person name="Archer D.B."/>
            <person name="Penalva M.A."/>
            <person name="Oakley B.R."/>
            <person name="Momany M."/>
            <person name="Tanaka T."/>
            <person name="Kumagai T."/>
            <person name="Asai K."/>
            <person name="Machida M."/>
            <person name="Nierman W.C."/>
            <person name="Denning D.W."/>
            <person name="Caddick M.X."/>
            <person name="Hynes M."/>
            <person name="Paoletti M."/>
            <person name="Fischer R."/>
            <person name="Miller B.L."/>
            <person name="Dyer P.S."/>
            <person name="Sachs M.S."/>
            <person name="Osmani S.A."/>
            <person name="Birren B.W."/>
        </authorList>
    </citation>
    <scope>NUCLEOTIDE SEQUENCE [LARGE SCALE GENOMIC DNA]</scope>
    <source>
        <strain>FGSC A4 / ATCC 38163 / CBS 112.46 / NRRL 194 / M139</strain>
    </source>
</reference>
<reference key="2">
    <citation type="journal article" date="2009" name="Fungal Genet. Biol.">
        <title>The 2008 update of the Aspergillus nidulans genome annotation: a community effort.</title>
        <authorList>
            <person name="Wortman J.R."/>
            <person name="Gilsenan J.M."/>
            <person name="Joardar V."/>
            <person name="Deegan J."/>
            <person name="Clutterbuck J."/>
            <person name="Andersen M.R."/>
            <person name="Archer D."/>
            <person name="Bencina M."/>
            <person name="Braus G."/>
            <person name="Coutinho P."/>
            <person name="von Dohren H."/>
            <person name="Doonan J."/>
            <person name="Driessen A.J."/>
            <person name="Durek P."/>
            <person name="Espeso E."/>
            <person name="Fekete E."/>
            <person name="Flipphi M."/>
            <person name="Estrada C.G."/>
            <person name="Geysens S."/>
            <person name="Goldman G."/>
            <person name="de Groot P.W."/>
            <person name="Hansen K."/>
            <person name="Harris S.D."/>
            <person name="Heinekamp T."/>
            <person name="Helmstaedt K."/>
            <person name="Henrissat B."/>
            <person name="Hofmann G."/>
            <person name="Homan T."/>
            <person name="Horio T."/>
            <person name="Horiuchi H."/>
            <person name="James S."/>
            <person name="Jones M."/>
            <person name="Karaffa L."/>
            <person name="Karanyi Z."/>
            <person name="Kato M."/>
            <person name="Keller N."/>
            <person name="Kelly D.E."/>
            <person name="Kiel J.A."/>
            <person name="Kim J.M."/>
            <person name="van der Klei I.J."/>
            <person name="Klis F.M."/>
            <person name="Kovalchuk A."/>
            <person name="Krasevec N."/>
            <person name="Kubicek C.P."/>
            <person name="Liu B."/>
            <person name="Maccabe A."/>
            <person name="Meyer V."/>
            <person name="Mirabito P."/>
            <person name="Miskei M."/>
            <person name="Mos M."/>
            <person name="Mullins J."/>
            <person name="Nelson D.R."/>
            <person name="Nielsen J."/>
            <person name="Oakley B.R."/>
            <person name="Osmani S.A."/>
            <person name="Pakula T."/>
            <person name="Paszewski A."/>
            <person name="Paulsen I."/>
            <person name="Pilsyk S."/>
            <person name="Pocsi I."/>
            <person name="Punt P.J."/>
            <person name="Ram A.F."/>
            <person name="Ren Q."/>
            <person name="Robellet X."/>
            <person name="Robson G."/>
            <person name="Seiboth B."/>
            <person name="van Solingen P."/>
            <person name="Specht T."/>
            <person name="Sun J."/>
            <person name="Taheri-Talesh N."/>
            <person name="Takeshita N."/>
            <person name="Ussery D."/>
            <person name="vanKuyk P.A."/>
            <person name="Visser H."/>
            <person name="van de Vondervoort P.J."/>
            <person name="de Vries R.P."/>
            <person name="Walton J."/>
            <person name="Xiang X."/>
            <person name="Xiong Y."/>
            <person name="Zeng A.P."/>
            <person name="Brandt B.W."/>
            <person name="Cornell M.J."/>
            <person name="van den Hondel C.A."/>
            <person name="Visser J."/>
            <person name="Oliver S.G."/>
            <person name="Turner G."/>
        </authorList>
    </citation>
    <scope>GENOME REANNOTATION</scope>
    <source>
        <strain>FGSC A4 / ATCC 38163 / CBS 112.46 / NRRL 194 / M139</strain>
    </source>
</reference>
<dbReference type="EC" id="6.3.5.2" evidence="1"/>
<dbReference type="EMBL" id="AACD01000095">
    <property type="protein sequence ID" value="EAA62271.1"/>
    <property type="molecule type" value="Genomic_DNA"/>
</dbReference>
<dbReference type="EMBL" id="BN001305">
    <property type="protein sequence ID" value="CBF81652.1"/>
    <property type="molecule type" value="Genomic_DNA"/>
</dbReference>
<dbReference type="RefSeq" id="XP_663170.1">
    <property type="nucleotide sequence ID" value="XM_658078.1"/>
</dbReference>
<dbReference type="SMR" id="Q5B1L4"/>
<dbReference type="FunCoup" id="Q5B1L4">
    <property type="interactions" value="1054"/>
</dbReference>
<dbReference type="STRING" id="227321.Q5B1L4"/>
<dbReference type="MEROPS" id="C26.957"/>
<dbReference type="EnsemblFungi" id="CBF81652">
    <property type="protein sequence ID" value="CBF81652"/>
    <property type="gene ID" value="ANIA_05566"/>
</dbReference>
<dbReference type="KEGG" id="ani:ANIA_05566"/>
<dbReference type="VEuPathDB" id="FungiDB:AN5566"/>
<dbReference type="eggNOG" id="KOG1622">
    <property type="taxonomic scope" value="Eukaryota"/>
</dbReference>
<dbReference type="HOGENOM" id="CLU_014340_0_5_1"/>
<dbReference type="InParanoid" id="Q5B1L4"/>
<dbReference type="OMA" id="IWQSFAV"/>
<dbReference type="OrthoDB" id="1724632at2759"/>
<dbReference type="UniPathway" id="UPA00189">
    <property type="reaction ID" value="UER00296"/>
</dbReference>
<dbReference type="Proteomes" id="UP000000560">
    <property type="component" value="Chromosome V"/>
</dbReference>
<dbReference type="GO" id="GO:0005829">
    <property type="term" value="C:cytosol"/>
    <property type="evidence" value="ECO:0000318"/>
    <property type="project" value="GO_Central"/>
</dbReference>
<dbReference type="GO" id="GO:0005524">
    <property type="term" value="F:ATP binding"/>
    <property type="evidence" value="ECO:0007669"/>
    <property type="project" value="UniProtKB-KW"/>
</dbReference>
<dbReference type="GO" id="GO:0003922">
    <property type="term" value="F:GMP synthase (glutamine-hydrolyzing) activity"/>
    <property type="evidence" value="ECO:0000250"/>
    <property type="project" value="UniProtKB"/>
</dbReference>
<dbReference type="GO" id="GO:0003921">
    <property type="term" value="F:GMP synthase activity"/>
    <property type="evidence" value="ECO:0000318"/>
    <property type="project" value="GO_Central"/>
</dbReference>
<dbReference type="GO" id="GO:0006177">
    <property type="term" value="P:GMP biosynthetic process"/>
    <property type="evidence" value="ECO:0000250"/>
    <property type="project" value="UniProtKB"/>
</dbReference>
<dbReference type="CDD" id="cd01742">
    <property type="entry name" value="GATase1_GMP_Synthase"/>
    <property type="match status" value="1"/>
</dbReference>
<dbReference type="CDD" id="cd01997">
    <property type="entry name" value="GMP_synthase_C"/>
    <property type="match status" value="1"/>
</dbReference>
<dbReference type="FunFam" id="3.30.300.10:FF:000002">
    <property type="entry name" value="GMP synthase [glutamine-hydrolyzing]"/>
    <property type="match status" value="1"/>
</dbReference>
<dbReference type="FunFam" id="3.40.50.620:FF:000001">
    <property type="entry name" value="GMP synthase [glutamine-hydrolyzing]"/>
    <property type="match status" value="1"/>
</dbReference>
<dbReference type="FunFam" id="3.40.50.880:FF:000001">
    <property type="entry name" value="GMP synthase [glutamine-hydrolyzing]"/>
    <property type="match status" value="1"/>
</dbReference>
<dbReference type="Gene3D" id="3.30.300.10">
    <property type="match status" value="1"/>
</dbReference>
<dbReference type="Gene3D" id="3.40.50.880">
    <property type="match status" value="1"/>
</dbReference>
<dbReference type="Gene3D" id="3.40.50.620">
    <property type="entry name" value="HUPs"/>
    <property type="match status" value="1"/>
</dbReference>
<dbReference type="HAMAP" id="MF_00344">
    <property type="entry name" value="GMP_synthase"/>
    <property type="match status" value="1"/>
</dbReference>
<dbReference type="InterPro" id="IPR029062">
    <property type="entry name" value="Class_I_gatase-like"/>
</dbReference>
<dbReference type="InterPro" id="IPR017926">
    <property type="entry name" value="GATASE"/>
</dbReference>
<dbReference type="InterPro" id="IPR001674">
    <property type="entry name" value="GMP_synth_C"/>
</dbReference>
<dbReference type="InterPro" id="IPR004739">
    <property type="entry name" value="GMP_synth_GATase"/>
</dbReference>
<dbReference type="InterPro" id="IPR022955">
    <property type="entry name" value="GMP_synthase"/>
</dbReference>
<dbReference type="InterPro" id="IPR025777">
    <property type="entry name" value="GMPS_ATP_PPase_dom"/>
</dbReference>
<dbReference type="InterPro" id="IPR022310">
    <property type="entry name" value="NAD/GMP_synthase"/>
</dbReference>
<dbReference type="InterPro" id="IPR014729">
    <property type="entry name" value="Rossmann-like_a/b/a_fold"/>
</dbReference>
<dbReference type="NCBIfam" id="TIGR00884">
    <property type="entry name" value="guaA_Cterm"/>
    <property type="match status" value="1"/>
</dbReference>
<dbReference type="NCBIfam" id="TIGR00888">
    <property type="entry name" value="guaA_Nterm"/>
    <property type="match status" value="1"/>
</dbReference>
<dbReference type="NCBIfam" id="NF000848">
    <property type="entry name" value="PRK00074.1"/>
    <property type="match status" value="1"/>
</dbReference>
<dbReference type="PANTHER" id="PTHR11922:SF2">
    <property type="entry name" value="GMP SYNTHASE [GLUTAMINE-HYDROLYZING]"/>
    <property type="match status" value="1"/>
</dbReference>
<dbReference type="PANTHER" id="PTHR11922">
    <property type="entry name" value="GMP SYNTHASE-RELATED"/>
    <property type="match status" value="1"/>
</dbReference>
<dbReference type="Pfam" id="PF00117">
    <property type="entry name" value="GATase"/>
    <property type="match status" value="1"/>
</dbReference>
<dbReference type="Pfam" id="PF00958">
    <property type="entry name" value="GMP_synt_C"/>
    <property type="match status" value="1"/>
</dbReference>
<dbReference type="Pfam" id="PF02540">
    <property type="entry name" value="NAD_synthase"/>
    <property type="match status" value="1"/>
</dbReference>
<dbReference type="PRINTS" id="PR00097">
    <property type="entry name" value="ANTSNTHASEII"/>
</dbReference>
<dbReference type="PRINTS" id="PR00096">
    <property type="entry name" value="GATASE"/>
</dbReference>
<dbReference type="SUPFAM" id="SSF52402">
    <property type="entry name" value="Adenine nucleotide alpha hydrolases-like"/>
    <property type="match status" value="1"/>
</dbReference>
<dbReference type="SUPFAM" id="SSF52317">
    <property type="entry name" value="Class I glutamine amidotransferase-like"/>
    <property type="match status" value="1"/>
</dbReference>
<dbReference type="SUPFAM" id="SSF54810">
    <property type="entry name" value="GMP synthetase C-terminal dimerisation domain"/>
    <property type="match status" value="1"/>
</dbReference>
<dbReference type="PROSITE" id="PS51273">
    <property type="entry name" value="GATASE_TYPE_1"/>
    <property type="match status" value="1"/>
</dbReference>
<dbReference type="PROSITE" id="PS51553">
    <property type="entry name" value="GMPS_ATP_PPASE"/>
    <property type="match status" value="1"/>
</dbReference>
<organism>
    <name type="scientific">Emericella nidulans (strain FGSC A4 / ATCC 38163 / CBS 112.46 / NRRL 194 / M139)</name>
    <name type="common">Aspergillus nidulans</name>
    <dbReference type="NCBI Taxonomy" id="227321"/>
    <lineage>
        <taxon>Eukaryota</taxon>
        <taxon>Fungi</taxon>
        <taxon>Dikarya</taxon>
        <taxon>Ascomycota</taxon>
        <taxon>Pezizomycotina</taxon>
        <taxon>Eurotiomycetes</taxon>
        <taxon>Eurotiomycetidae</taxon>
        <taxon>Eurotiales</taxon>
        <taxon>Aspergillaceae</taxon>
        <taxon>Aspergillus</taxon>
        <taxon>Aspergillus subgen. Nidulantes</taxon>
    </lineage>
</organism>
<evidence type="ECO:0000250" key="1">
    <source>
        <dbReference type="UniProtKB" id="P38625"/>
    </source>
</evidence>
<evidence type="ECO:0000250" key="2">
    <source>
        <dbReference type="UniProtKB" id="P49915"/>
    </source>
</evidence>
<evidence type="ECO:0000250" key="3">
    <source>
        <dbReference type="UniProtKB" id="Q4WFT3"/>
    </source>
</evidence>
<evidence type="ECO:0000250" key="4">
    <source>
        <dbReference type="UniProtKB" id="Q9P772"/>
    </source>
</evidence>
<evidence type="ECO:0000255" key="5">
    <source>
        <dbReference type="PROSITE-ProRule" id="PRU00605"/>
    </source>
</evidence>
<evidence type="ECO:0000255" key="6">
    <source>
        <dbReference type="PROSITE-ProRule" id="PRU00886"/>
    </source>
</evidence>
<keyword id="KW-0067">ATP-binding</keyword>
<keyword id="KW-0963">Cytoplasm</keyword>
<keyword id="KW-0315">Glutamine amidotransferase</keyword>
<keyword id="KW-0332">GMP biosynthesis</keyword>
<keyword id="KW-0436">Ligase</keyword>
<keyword id="KW-0460">Magnesium</keyword>
<keyword id="KW-0547">Nucleotide-binding</keyword>
<keyword id="KW-0658">Purine biosynthesis</keyword>
<keyword id="KW-1185">Reference proteome</keyword>
<accession>Q5B1L4</accession>
<accession>C8VG41</accession>
<feature type="chain" id="PRO_0000286149" description="GMP synthase [glutamine-hydrolyzing]">
    <location>
        <begin position="1"/>
        <end position="533"/>
    </location>
</feature>
<feature type="domain" description="Glutamine amidotransferase type-1" evidence="5">
    <location>
        <begin position="12"/>
        <end position="206"/>
    </location>
</feature>
<feature type="domain" description="GMPS ATP-PPase" evidence="6">
    <location>
        <begin position="207"/>
        <end position="408"/>
    </location>
</feature>
<feature type="active site" description="Nucleophile" evidence="5">
    <location>
        <position position="88"/>
    </location>
</feature>
<feature type="active site" evidence="5">
    <location>
        <position position="180"/>
    </location>
</feature>
<feature type="active site" evidence="5">
    <location>
        <position position="182"/>
    </location>
</feature>
<feature type="binding site" evidence="6">
    <location>
        <begin position="235"/>
        <end position="241"/>
    </location>
    <ligand>
        <name>ATP</name>
        <dbReference type="ChEBI" id="CHEBI:30616"/>
    </ligand>
</feature>
<feature type="binding site" evidence="2">
    <location>
        <position position="308"/>
    </location>
    <ligand>
        <name>XMP</name>
        <dbReference type="ChEBI" id="CHEBI:57464"/>
    </ligand>
</feature>
<feature type="binding site" evidence="2">
    <location>
        <position position="470"/>
    </location>
    <ligand>
        <name>XMP</name>
        <dbReference type="ChEBI" id="CHEBI:57464"/>
    </ligand>
</feature>
<feature type="binding site" evidence="2">
    <location>
        <position position="525"/>
    </location>
    <ligand>
        <name>XMP</name>
        <dbReference type="ChEBI" id="CHEBI:57464"/>
    </ligand>
</feature>
<feature type="binding site" evidence="2">
    <location>
        <position position="531"/>
    </location>
    <ligand>
        <name>XMP</name>
        <dbReference type="ChEBI" id="CHEBI:57464"/>
    </ligand>
</feature>
<gene>
    <name type="primary">gua1</name>
    <name type="ORF">AN5566</name>
</gene>